<evidence type="ECO:0000255" key="1"/>
<evidence type="ECO:0000256" key="2">
    <source>
        <dbReference type="SAM" id="MobiDB-lite"/>
    </source>
</evidence>
<evidence type="ECO:0000305" key="3"/>
<proteinExistence type="evidence at protein level"/>
<feature type="chain" id="PRO_0000309236" description="Transmembrane protein 82">
    <location>
        <begin position="1"/>
        <end position="343"/>
    </location>
</feature>
<feature type="transmembrane region" description="Helical" evidence="1">
    <location>
        <begin position="30"/>
        <end position="50"/>
    </location>
</feature>
<feature type="transmembrane region" description="Helical" evidence="1">
    <location>
        <begin position="77"/>
        <end position="97"/>
    </location>
</feature>
<feature type="transmembrane region" description="Helical" evidence="1">
    <location>
        <begin position="121"/>
        <end position="141"/>
    </location>
</feature>
<feature type="transmembrane region" description="Helical" evidence="1">
    <location>
        <begin position="145"/>
        <end position="167"/>
    </location>
</feature>
<feature type="transmembrane region" description="Helical" evidence="1">
    <location>
        <begin position="203"/>
        <end position="223"/>
    </location>
</feature>
<feature type="transmembrane region" description="Helical" evidence="1">
    <location>
        <begin position="233"/>
        <end position="252"/>
    </location>
</feature>
<feature type="transmembrane region" description="Helical" evidence="1">
    <location>
        <begin position="263"/>
        <end position="283"/>
    </location>
</feature>
<feature type="transmembrane region" description="Helical" evidence="1">
    <location>
        <begin position="285"/>
        <end position="305"/>
    </location>
</feature>
<feature type="region of interest" description="Disordered" evidence="2">
    <location>
        <begin position="320"/>
        <end position="343"/>
    </location>
</feature>
<feature type="compositionally biased region" description="Pro residues" evidence="2">
    <location>
        <begin position="320"/>
        <end position="333"/>
    </location>
</feature>
<feature type="compositionally biased region" description="Low complexity" evidence="2">
    <location>
        <begin position="334"/>
        <end position="343"/>
    </location>
</feature>
<feature type="sequence variant" id="VAR_036917" description="In dbSNP:rs11580250.">
    <original>R</original>
    <variation>H</variation>
    <location>
        <position position="284"/>
    </location>
</feature>
<feature type="sequence conflict" description="In Ref. 2; AAI27708." evidence="3" ref="2">
    <original>L</original>
    <variation>IW</variation>
    <location>
        <position position="308"/>
    </location>
</feature>
<gene>
    <name type="primary">TMEM82</name>
</gene>
<protein>
    <recommendedName>
        <fullName>Transmembrane protein 82</fullName>
    </recommendedName>
</protein>
<keyword id="KW-0472">Membrane</keyword>
<keyword id="KW-1267">Proteomics identification</keyword>
<keyword id="KW-1185">Reference proteome</keyword>
<keyword id="KW-0812">Transmembrane</keyword>
<keyword id="KW-1133">Transmembrane helix</keyword>
<dbReference type="EMBL" id="AL450998">
    <property type="status" value="NOT_ANNOTATED_CDS"/>
    <property type="molecule type" value="Genomic_DNA"/>
</dbReference>
<dbReference type="EMBL" id="BC127706">
    <property type="protein sequence ID" value="AAI27707.1"/>
    <property type="molecule type" value="mRNA"/>
</dbReference>
<dbReference type="EMBL" id="BC127707">
    <property type="protein sequence ID" value="AAI27708.1"/>
    <property type="molecule type" value="mRNA"/>
</dbReference>
<dbReference type="EMBL" id="BC137239">
    <property type="protein sequence ID" value="AAI37240.1"/>
    <property type="molecule type" value="mRNA"/>
</dbReference>
<dbReference type="EMBL" id="BC137240">
    <property type="protein sequence ID" value="AAI37241.1"/>
    <property type="molecule type" value="mRNA"/>
</dbReference>
<dbReference type="CCDS" id="CCDS30608.1"/>
<dbReference type="RefSeq" id="NP_001013663.1">
    <property type="nucleotide sequence ID" value="NM_001013641.3"/>
</dbReference>
<dbReference type="BioGRID" id="132766">
    <property type="interactions" value="4"/>
</dbReference>
<dbReference type="FunCoup" id="A0PJX8">
    <property type="interactions" value="4"/>
</dbReference>
<dbReference type="IntAct" id="A0PJX8">
    <property type="interactions" value="1"/>
</dbReference>
<dbReference type="STRING" id="9606.ENSP00000364938"/>
<dbReference type="GlyGen" id="A0PJX8">
    <property type="glycosylation" value="1 site"/>
</dbReference>
<dbReference type="PhosphoSitePlus" id="A0PJX8"/>
<dbReference type="BioMuta" id="TMEM82"/>
<dbReference type="jPOST" id="A0PJX8"/>
<dbReference type="MassIVE" id="A0PJX8"/>
<dbReference type="PaxDb" id="9606-ENSP00000364938"/>
<dbReference type="PeptideAtlas" id="A0PJX8"/>
<dbReference type="ProteomicsDB" id="70"/>
<dbReference type="Antibodypedia" id="28976">
    <property type="antibodies" value="57 antibodies from 17 providers"/>
</dbReference>
<dbReference type="DNASU" id="388595"/>
<dbReference type="Ensembl" id="ENST00000375782.2">
    <property type="protein sequence ID" value="ENSP00000364938.1"/>
    <property type="gene ID" value="ENSG00000162460.7"/>
</dbReference>
<dbReference type="GeneID" id="388595"/>
<dbReference type="KEGG" id="hsa:388595"/>
<dbReference type="MANE-Select" id="ENST00000375782.2">
    <property type="protein sequence ID" value="ENSP00000364938.1"/>
    <property type="RefSeq nucleotide sequence ID" value="NM_001013641.3"/>
    <property type="RefSeq protein sequence ID" value="NP_001013663.1"/>
</dbReference>
<dbReference type="UCSC" id="uc001axc.5">
    <property type="organism name" value="human"/>
</dbReference>
<dbReference type="AGR" id="HGNC:32350"/>
<dbReference type="CTD" id="388595"/>
<dbReference type="DisGeNET" id="388595"/>
<dbReference type="GeneCards" id="TMEM82"/>
<dbReference type="HGNC" id="HGNC:32350">
    <property type="gene designation" value="TMEM82"/>
</dbReference>
<dbReference type="HPA" id="ENSG00000162460">
    <property type="expression patterns" value="Tissue enhanced (intestine, kidney, liver)"/>
</dbReference>
<dbReference type="neXtProt" id="NX_A0PJX8"/>
<dbReference type="OpenTargets" id="ENSG00000162460"/>
<dbReference type="PharmGKB" id="PA162406636"/>
<dbReference type="VEuPathDB" id="HostDB:ENSG00000162460"/>
<dbReference type="eggNOG" id="ENOG502QVH3">
    <property type="taxonomic scope" value="Eukaryota"/>
</dbReference>
<dbReference type="GeneTree" id="ENSGT00500000045021"/>
<dbReference type="HOGENOM" id="CLU_078402_0_0_1"/>
<dbReference type="InParanoid" id="A0PJX8"/>
<dbReference type="OMA" id="HVCQLYE"/>
<dbReference type="OrthoDB" id="9943056at2759"/>
<dbReference type="PAN-GO" id="A0PJX8">
    <property type="GO annotations" value="0 GO annotations based on evolutionary models"/>
</dbReference>
<dbReference type="PhylomeDB" id="A0PJX8"/>
<dbReference type="TreeFam" id="TF332112"/>
<dbReference type="PathwayCommons" id="A0PJX8"/>
<dbReference type="SignaLink" id="A0PJX8"/>
<dbReference type="BioGRID-ORCS" id="388595">
    <property type="hits" value="107 hits in 1077 CRISPR screens"/>
</dbReference>
<dbReference type="GenomeRNAi" id="388595"/>
<dbReference type="Pharos" id="A0PJX8">
    <property type="development level" value="Tdark"/>
</dbReference>
<dbReference type="PRO" id="PR:A0PJX8"/>
<dbReference type="Proteomes" id="UP000005640">
    <property type="component" value="Chromosome 1"/>
</dbReference>
<dbReference type="RNAct" id="A0PJX8">
    <property type="molecule type" value="protein"/>
</dbReference>
<dbReference type="Bgee" id="ENSG00000162460">
    <property type="expression patterns" value="Expressed in right lobe of liver and 39 other cell types or tissues"/>
</dbReference>
<dbReference type="GO" id="GO:0016020">
    <property type="term" value="C:membrane"/>
    <property type="evidence" value="ECO:0007669"/>
    <property type="project" value="UniProtKB-SubCell"/>
</dbReference>
<dbReference type="InterPro" id="IPR031648">
    <property type="entry name" value="TMEM82"/>
</dbReference>
<dbReference type="PANTHER" id="PTHR35257">
    <property type="entry name" value="TRANSMEMBRANE PROTEIN 82"/>
    <property type="match status" value="1"/>
</dbReference>
<dbReference type="PANTHER" id="PTHR35257:SF1">
    <property type="entry name" value="TRANSMEMBRANE PROTEIN 82"/>
    <property type="match status" value="1"/>
</dbReference>
<dbReference type="Pfam" id="PF15816">
    <property type="entry name" value="TMEM82"/>
    <property type="match status" value="1"/>
</dbReference>
<name>TMM82_HUMAN</name>
<comment type="subcellular location">
    <subcellularLocation>
        <location evidence="3">Membrane</location>
        <topology evidence="3">Multi-pass membrane protein</topology>
    </subcellularLocation>
</comment>
<comment type="similarity">
    <text evidence="3">Belongs to the TMEM82 family.</text>
</comment>
<reference key="1">
    <citation type="journal article" date="2006" name="Nature">
        <title>The DNA sequence and biological annotation of human chromosome 1.</title>
        <authorList>
            <person name="Gregory S.G."/>
            <person name="Barlow K.F."/>
            <person name="McLay K.E."/>
            <person name="Kaul R."/>
            <person name="Swarbreck D."/>
            <person name="Dunham A."/>
            <person name="Scott C.E."/>
            <person name="Howe K.L."/>
            <person name="Woodfine K."/>
            <person name="Spencer C.C.A."/>
            <person name="Jones M.C."/>
            <person name="Gillson C."/>
            <person name="Searle S."/>
            <person name="Zhou Y."/>
            <person name="Kokocinski F."/>
            <person name="McDonald L."/>
            <person name="Evans R."/>
            <person name="Phillips K."/>
            <person name="Atkinson A."/>
            <person name="Cooper R."/>
            <person name="Jones C."/>
            <person name="Hall R.E."/>
            <person name="Andrews T.D."/>
            <person name="Lloyd C."/>
            <person name="Ainscough R."/>
            <person name="Almeida J.P."/>
            <person name="Ambrose K.D."/>
            <person name="Anderson F."/>
            <person name="Andrew R.W."/>
            <person name="Ashwell R.I.S."/>
            <person name="Aubin K."/>
            <person name="Babbage A.K."/>
            <person name="Bagguley C.L."/>
            <person name="Bailey J."/>
            <person name="Beasley H."/>
            <person name="Bethel G."/>
            <person name="Bird C.P."/>
            <person name="Bray-Allen S."/>
            <person name="Brown J.Y."/>
            <person name="Brown A.J."/>
            <person name="Buckley D."/>
            <person name="Burton J."/>
            <person name="Bye J."/>
            <person name="Carder C."/>
            <person name="Chapman J.C."/>
            <person name="Clark S.Y."/>
            <person name="Clarke G."/>
            <person name="Clee C."/>
            <person name="Cobley V."/>
            <person name="Collier R.E."/>
            <person name="Corby N."/>
            <person name="Coville G.J."/>
            <person name="Davies J."/>
            <person name="Deadman R."/>
            <person name="Dunn M."/>
            <person name="Earthrowl M."/>
            <person name="Ellington A.G."/>
            <person name="Errington H."/>
            <person name="Frankish A."/>
            <person name="Frankland J."/>
            <person name="French L."/>
            <person name="Garner P."/>
            <person name="Garnett J."/>
            <person name="Gay L."/>
            <person name="Ghori M.R.J."/>
            <person name="Gibson R."/>
            <person name="Gilby L.M."/>
            <person name="Gillett W."/>
            <person name="Glithero R.J."/>
            <person name="Grafham D.V."/>
            <person name="Griffiths C."/>
            <person name="Griffiths-Jones S."/>
            <person name="Grocock R."/>
            <person name="Hammond S."/>
            <person name="Harrison E.S.I."/>
            <person name="Hart E."/>
            <person name="Haugen E."/>
            <person name="Heath P.D."/>
            <person name="Holmes S."/>
            <person name="Holt K."/>
            <person name="Howden P.J."/>
            <person name="Hunt A.R."/>
            <person name="Hunt S.E."/>
            <person name="Hunter G."/>
            <person name="Isherwood J."/>
            <person name="James R."/>
            <person name="Johnson C."/>
            <person name="Johnson D."/>
            <person name="Joy A."/>
            <person name="Kay M."/>
            <person name="Kershaw J.K."/>
            <person name="Kibukawa M."/>
            <person name="Kimberley A.M."/>
            <person name="King A."/>
            <person name="Knights A.J."/>
            <person name="Lad H."/>
            <person name="Laird G."/>
            <person name="Lawlor S."/>
            <person name="Leongamornlert D.A."/>
            <person name="Lloyd D.M."/>
            <person name="Loveland J."/>
            <person name="Lovell J."/>
            <person name="Lush M.J."/>
            <person name="Lyne R."/>
            <person name="Martin S."/>
            <person name="Mashreghi-Mohammadi M."/>
            <person name="Matthews L."/>
            <person name="Matthews N.S.W."/>
            <person name="McLaren S."/>
            <person name="Milne S."/>
            <person name="Mistry S."/>
            <person name="Moore M.J.F."/>
            <person name="Nickerson T."/>
            <person name="O'Dell C.N."/>
            <person name="Oliver K."/>
            <person name="Palmeiri A."/>
            <person name="Palmer S.A."/>
            <person name="Parker A."/>
            <person name="Patel D."/>
            <person name="Pearce A.V."/>
            <person name="Peck A.I."/>
            <person name="Pelan S."/>
            <person name="Phelps K."/>
            <person name="Phillimore B.J."/>
            <person name="Plumb R."/>
            <person name="Rajan J."/>
            <person name="Raymond C."/>
            <person name="Rouse G."/>
            <person name="Saenphimmachak C."/>
            <person name="Sehra H.K."/>
            <person name="Sheridan E."/>
            <person name="Shownkeen R."/>
            <person name="Sims S."/>
            <person name="Skuce C.D."/>
            <person name="Smith M."/>
            <person name="Steward C."/>
            <person name="Subramanian S."/>
            <person name="Sycamore N."/>
            <person name="Tracey A."/>
            <person name="Tromans A."/>
            <person name="Van Helmond Z."/>
            <person name="Wall M."/>
            <person name="Wallis J.M."/>
            <person name="White S."/>
            <person name="Whitehead S.L."/>
            <person name="Wilkinson J.E."/>
            <person name="Willey D.L."/>
            <person name="Williams H."/>
            <person name="Wilming L."/>
            <person name="Wray P.W."/>
            <person name="Wu Z."/>
            <person name="Coulson A."/>
            <person name="Vaudin M."/>
            <person name="Sulston J.E."/>
            <person name="Durbin R.M."/>
            <person name="Hubbard T."/>
            <person name="Wooster R."/>
            <person name="Dunham I."/>
            <person name="Carter N.P."/>
            <person name="McVean G."/>
            <person name="Ross M.T."/>
            <person name="Harrow J."/>
            <person name="Olson M.V."/>
            <person name="Beck S."/>
            <person name="Rogers J."/>
            <person name="Bentley D.R."/>
        </authorList>
    </citation>
    <scope>NUCLEOTIDE SEQUENCE [LARGE SCALE GENOMIC DNA]</scope>
</reference>
<reference key="2">
    <citation type="journal article" date="2004" name="Genome Res.">
        <title>The status, quality, and expansion of the NIH full-length cDNA project: the Mammalian Gene Collection (MGC).</title>
        <authorList>
            <consortium name="The MGC Project Team"/>
        </authorList>
    </citation>
    <scope>NUCLEOTIDE SEQUENCE [LARGE SCALE MRNA]</scope>
</reference>
<sequence>MFSLPSLPSWLPGLPSLEWGSSLLDSLLQGLIGALGVLVLNSLLKVYFFVGCANDPQRRPEKERLRAQWASLETVHLAGLALFLTVVGSRVAALVVLEFSLRAVSTLLSLGKGSQGAAERLQLYLLCQYSLGCGLTCGLSFLQEGAPHRTLNLLLSLGLATLLGLGARRLHRHVCRLYELHSSQRYCGVCLGLLAHAHGLPQLLGRALAIAFAVGDLAAVALINQDFLTTSEAMRFWTPLTICYTLLVIYMQEEQRQHPGLQSQVQTVLVRMGGLFVLLLTVGRWLDLLGILVSLLGELWCLVGVRTLLDLCQIQDFPSQRPPVSTPSQPLPSAPQSQSSAPS</sequence>
<organism>
    <name type="scientific">Homo sapiens</name>
    <name type="common">Human</name>
    <dbReference type="NCBI Taxonomy" id="9606"/>
    <lineage>
        <taxon>Eukaryota</taxon>
        <taxon>Metazoa</taxon>
        <taxon>Chordata</taxon>
        <taxon>Craniata</taxon>
        <taxon>Vertebrata</taxon>
        <taxon>Euteleostomi</taxon>
        <taxon>Mammalia</taxon>
        <taxon>Eutheria</taxon>
        <taxon>Euarchontoglires</taxon>
        <taxon>Primates</taxon>
        <taxon>Haplorrhini</taxon>
        <taxon>Catarrhini</taxon>
        <taxon>Hominidae</taxon>
        <taxon>Homo</taxon>
    </lineage>
</organism>
<accession>A0PJX8</accession>
<accession>B2RP27</accession>
<accession>Q5VVD4</accession>